<dbReference type="EMBL" id="CP000687">
    <property type="protein sequence ID" value="ABY69587.1"/>
    <property type="molecule type" value="Genomic_DNA"/>
</dbReference>
<dbReference type="RefSeq" id="WP_012263058.1">
    <property type="nucleotide sequence ID" value="NC_010278.1"/>
</dbReference>
<dbReference type="SMR" id="B0BPV2"/>
<dbReference type="KEGG" id="apj:APJL_1031"/>
<dbReference type="HOGENOM" id="CLU_132825_1_1_6"/>
<dbReference type="Proteomes" id="UP000008547">
    <property type="component" value="Chromosome"/>
</dbReference>
<dbReference type="GO" id="GO:0005737">
    <property type="term" value="C:cytoplasm"/>
    <property type="evidence" value="ECO:0007669"/>
    <property type="project" value="UniProtKB-SubCell"/>
</dbReference>
<dbReference type="GO" id="GO:0005524">
    <property type="term" value="F:ATP binding"/>
    <property type="evidence" value="ECO:0007669"/>
    <property type="project" value="InterPro"/>
</dbReference>
<dbReference type="GO" id="GO:0046872">
    <property type="term" value="F:metal ion binding"/>
    <property type="evidence" value="ECO:0007669"/>
    <property type="project" value="TreeGrafter"/>
</dbReference>
<dbReference type="GO" id="GO:0044183">
    <property type="term" value="F:protein folding chaperone"/>
    <property type="evidence" value="ECO:0007669"/>
    <property type="project" value="InterPro"/>
</dbReference>
<dbReference type="GO" id="GO:0051087">
    <property type="term" value="F:protein-folding chaperone binding"/>
    <property type="evidence" value="ECO:0007669"/>
    <property type="project" value="TreeGrafter"/>
</dbReference>
<dbReference type="GO" id="GO:0051082">
    <property type="term" value="F:unfolded protein binding"/>
    <property type="evidence" value="ECO:0007669"/>
    <property type="project" value="TreeGrafter"/>
</dbReference>
<dbReference type="GO" id="GO:0051085">
    <property type="term" value="P:chaperone cofactor-dependent protein refolding"/>
    <property type="evidence" value="ECO:0007669"/>
    <property type="project" value="TreeGrafter"/>
</dbReference>
<dbReference type="CDD" id="cd00320">
    <property type="entry name" value="cpn10"/>
    <property type="match status" value="1"/>
</dbReference>
<dbReference type="FunFam" id="2.30.33.40:FF:000001">
    <property type="entry name" value="10 kDa chaperonin"/>
    <property type="match status" value="1"/>
</dbReference>
<dbReference type="Gene3D" id="2.30.33.40">
    <property type="entry name" value="GroES chaperonin"/>
    <property type="match status" value="1"/>
</dbReference>
<dbReference type="HAMAP" id="MF_00580">
    <property type="entry name" value="CH10"/>
    <property type="match status" value="1"/>
</dbReference>
<dbReference type="InterPro" id="IPR020818">
    <property type="entry name" value="Chaperonin_GroES"/>
</dbReference>
<dbReference type="InterPro" id="IPR037124">
    <property type="entry name" value="Chaperonin_GroES_sf"/>
</dbReference>
<dbReference type="InterPro" id="IPR018369">
    <property type="entry name" value="Chaprnonin_Cpn10_CS"/>
</dbReference>
<dbReference type="InterPro" id="IPR011032">
    <property type="entry name" value="GroES-like_sf"/>
</dbReference>
<dbReference type="NCBIfam" id="NF001526">
    <property type="entry name" value="PRK00364.1-1"/>
    <property type="match status" value="1"/>
</dbReference>
<dbReference type="PANTHER" id="PTHR10772">
    <property type="entry name" value="10 KDA HEAT SHOCK PROTEIN"/>
    <property type="match status" value="1"/>
</dbReference>
<dbReference type="PANTHER" id="PTHR10772:SF58">
    <property type="entry name" value="CO-CHAPERONIN GROES"/>
    <property type="match status" value="1"/>
</dbReference>
<dbReference type="Pfam" id="PF00166">
    <property type="entry name" value="Cpn10"/>
    <property type="match status" value="1"/>
</dbReference>
<dbReference type="PRINTS" id="PR00297">
    <property type="entry name" value="CHAPERONIN10"/>
</dbReference>
<dbReference type="SMART" id="SM00883">
    <property type="entry name" value="Cpn10"/>
    <property type="match status" value="1"/>
</dbReference>
<dbReference type="SUPFAM" id="SSF50129">
    <property type="entry name" value="GroES-like"/>
    <property type="match status" value="1"/>
</dbReference>
<dbReference type="PROSITE" id="PS00681">
    <property type="entry name" value="CHAPERONINS_CPN10"/>
    <property type="match status" value="1"/>
</dbReference>
<keyword id="KW-0143">Chaperone</keyword>
<keyword id="KW-0963">Cytoplasm</keyword>
<comment type="function">
    <text evidence="1">Together with the chaperonin GroEL, plays an essential role in assisting protein folding. The GroEL-GroES system forms a nano-cage that allows encapsulation of the non-native substrate proteins and provides a physical environment optimized to promote and accelerate protein folding. GroES binds to the apical surface of the GroEL ring, thereby capping the opening of the GroEL channel.</text>
</comment>
<comment type="subunit">
    <text evidence="1">Heptamer of 7 subunits arranged in a ring. Interacts with the chaperonin GroEL.</text>
</comment>
<comment type="subcellular location">
    <subcellularLocation>
        <location evidence="1">Cytoplasm</location>
    </subcellularLocation>
</comment>
<comment type="similarity">
    <text evidence="1">Belongs to the GroES chaperonin family.</text>
</comment>
<protein>
    <recommendedName>
        <fullName evidence="1">Co-chaperonin GroES</fullName>
    </recommendedName>
    <alternativeName>
        <fullName evidence="1">10 kDa chaperonin</fullName>
    </alternativeName>
    <alternativeName>
        <fullName evidence="1">Chaperonin-10</fullName>
        <shortName evidence="1">Cpn10</shortName>
    </alternativeName>
</protein>
<evidence type="ECO:0000255" key="1">
    <source>
        <dbReference type="HAMAP-Rule" id="MF_00580"/>
    </source>
</evidence>
<organism>
    <name type="scientific">Actinobacillus pleuropneumoniae serotype 3 (strain JL03)</name>
    <dbReference type="NCBI Taxonomy" id="434271"/>
    <lineage>
        <taxon>Bacteria</taxon>
        <taxon>Pseudomonadati</taxon>
        <taxon>Pseudomonadota</taxon>
        <taxon>Gammaproteobacteria</taxon>
        <taxon>Pasteurellales</taxon>
        <taxon>Pasteurellaceae</taxon>
        <taxon>Actinobacillus</taxon>
    </lineage>
</organism>
<gene>
    <name evidence="1" type="primary">groES</name>
    <name evidence="1" type="synonym">groS</name>
    <name type="ordered locus">APJL_1031</name>
</gene>
<reference key="1">
    <citation type="journal article" date="2008" name="PLoS ONE">
        <title>Genome biology of Actinobacillus pleuropneumoniae JL03, an isolate of serotype 3 prevalent in China.</title>
        <authorList>
            <person name="Xu Z."/>
            <person name="Zhou Y."/>
            <person name="Li L."/>
            <person name="Zhou R."/>
            <person name="Xiao S."/>
            <person name="Wan Y."/>
            <person name="Zhang S."/>
            <person name="Wang K."/>
            <person name="Li W."/>
            <person name="Li L."/>
            <person name="Jin H."/>
            <person name="Kang M."/>
            <person name="Dalai B."/>
            <person name="Li T."/>
            <person name="Liu L."/>
            <person name="Cheng Y."/>
            <person name="Zhang L."/>
            <person name="Xu T."/>
            <person name="Zheng H."/>
            <person name="Pu S."/>
            <person name="Wang B."/>
            <person name="Gu W."/>
            <person name="Zhang X.L."/>
            <person name="Zhu G.-F."/>
            <person name="Wang S."/>
            <person name="Zhao G.-P."/>
            <person name="Chen H."/>
        </authorList>
    </citation>
    <scope>NUCLEOTIDE SEQUENCE [LARGE SCALE GENOMIC DNA]</scope>
    <source>
        <strain>JL03</strain>
    </source>
</reference>
<sequence>MTLRPLHDKVILKREEVETRSAGGIVLTGSAATKSTRGKVIAVSTGRLLENGSVQALAVKAGDVVIFNEGYGVKSEKIDGEEVLILSENDILAIVE</sequence>
<name>CH10_ACTPJ</name>
<feature type="chain" id="PRO_1000129618" description="Co-chaperonin GroES">
    <location>
        <begin position="1"/>
        <end position="96"/>
    </location>
</feature>
<accession>B0BPV2</accession>
<proteinExistence type="inferred from homology"/>